<comment type="function">
    <text evidence="1">This is one of the proteins that bind and probably mediate the attachment of the 5S RNA into the large ribosomal subunit, where it forms part of the central protuberance.</text>
</comment>
<comment type="subunit">
    <text evidence="1">Part of the 50S ribosomal subunit; part of the 5S rRNA/L5/L18/L25 subcomplex. Contacts the 5S and 23S rRNAs.</text>
</comment>
<comment type="similarity">
    <text evidence="1">Belongs to the universal ribosomal protein uL18 family.</text>
</comment>
<name>RL18_LEPBJ</name>
<organism>
    <name type="scientific">Leptospira borgpetersenii serovar Hardjo-bovis (strain JB197)</name>
    <dbReference type="NCBI Taxonomy" id="355277"/>
    <lineage>
        <taxon>Bacteria</taxon>
        <taxon>Pseudomonadati</taxon>
        <taxon>Spirochaetota</taxon>
        <taxon>Spirochaetia</taxon>
        <taxon>Leptospirales</taxon>
        <taxon>Leptospiraceae</taxon>
        <taxon>Leptospira</taxon>
    </lineage>
</organism>
<keyword id="KW-0687">Ribonucleoprotein</keyword>
<keyword id="KW-0689">Ribosomal protein</keyword>
<keyword id="KW-0694">RNA-binding</keyword>
<keyword id="KW-0699">rRNA-binding</keyword>
<accession>Q04PV4</accession>
<dbReference type="EMBL" id="CP000350">
    <property type="protein sequence ID" value="ABJ77066.1"/>
    <property type="molecule type" value="Genomic_DNA"/>
</dbReference>
<dbReference type="RefSeq" id="WP_002722973.1">
    <property type="nucleotide sequence ID" value="NC_008510.1"/>
</dbReference>
<dbReference type="SMR" id="Q04PV4"/>
<dbReference type="GeneID" id="61172966"/>
<dbReference type="KEGG" id="lbj:LBJ_2643"/>
<dbReference type="HOGENOM" id="CLU_098841_0_1_12"/>
<dbReference type="Proteomes" id="UP000000656">
    <property type="component" value="Chromosome 1"/>
</dbReference>
<dbReference type="GO" id="GO:0022625">
    <property type="term" value="C:cytosolic large ribosomal subunit"/>
    <property type="evidence" value="ECO:0007669"/>
    <property type="project" value="TreeGrafter"/>
</dbReference>
<dbReference type="GO" id="GO:0008097">
    <property type="term" value="F:5S rRNA binding"/>
    <property type="evidence" value="ECO:0007669"/>
    <property type="project" value="TreeGrafter"/>
</dbReference>
<dbReference type="GO" id="GO:0003735">
    <property type="term" value="F:structural constituent of ribosome"/>
    <property type="evidence" value="ECO:0007669"/>
    <property type="project" value="InterPro"/>
</dbReference>
<dbReference type="GO" id="GO:0006412">
    <property type="term" value="P:translation"/>
    <property type="evidence" value="ECO:0007669"/>
    <property type="project" value="UniProtKB-UniRule"/>
</dbReference>
<dbReference type="CDD" id="cd00432">
    <property type="entry name" value="Ribosomal_L18_L5e"/>
    <property type="match status" value="1"/>
</dbReference>
<dbReference type="FunFam" id="3.30.420.100:FF:000001">
    <property type="entry name" value="50S ribosomal protein L18"/>
    <property type="match status" value="1"/>
</dbReference>
<dbReference type="Gene3D" id="3.30.420.100">
    <property type="match status" value="1"/>
</dbReference>
<dbReference type="HAMAP" id="MF_01337_B">
    <property type="entry name" value="Ribosomal_uL18_B"/>
    <property type="match status" value="1"/>
</dbReference>
<dbReference type="InterPro" id="IPR004389">
    <property type="entry name" value="Ribosomal_uL18_bac-type"/>
</dbReference>
<dbReference type="InterPro" id="IPR005484">
    <property type="entry name" value="Ribosomal_uL18_bac/euk"/>
</dbReference>
<dbReference type="NCBIfam" id="TIGR00060">
    <property type="entry name" value="L18_bact"/>
    <property type="match status" value="1"/>
</dbReference>
<dbReference type="PANTHER" id="PTHR12899">
    <property type="entry name" value="39S RIBOSOMAL PROTEIN L18, MITOCHONDRIAL"/>
    <property type="match status" value="1"/>
</dbReference>
<dbReference type="PANTHER" id="PTHR12899:SF3">
    <property type="entry name" value="LARGE RIBOSOMAL SUBUNIT PROTEIN UL18M"/>
    <property type="match status" value="1"/>
</dbReference>
<dbReference type="Pfam" id="PF00861">
    <property type="entry name" value="Ribosomal_L18p"/>
    <property type="match status" value="1"/>
</dbReference>
<dbReference type="SUPFAM" id="SSF53137">
    <property type="entry name" value="Translational machinery components"/>
    <property type="match status" value="1"/>
</dbReference>
<feature type="chain" id="PRO_1000053049" description="Large ribosomal subunit protein uL18">
    <location>
        <begin position="1"/>
        <end position="122"/>
    </location>
</feature>
<sequence>MIDKLKKSVSKIRRAERSRFKLKKSGSRPRLVFNKSNKYLSCQIVDDIQGVTLAYATTSEKTFSSEGKSKKDVGAAKVLGKLIAERGSQKGVKQVMLDRSGMIFHGRIAAFAEGAREAGLEF</sequence>
<reference key="1">
    <citation type="journal article" date="2006" name="Proc. Natl. Acad. Sci. U.S.A.">
        <title>Genome reduction in Leptospira borgpetersenii reflects limited transmission potential.</title>
        <authorList>
            <person name="Bulach D.M."/>
            <person name="Zuerner R.L."/>
            <person name="Wilson P."/>
            <person name="Seemann T."/>
            <person name="McGrath A."/>
            <person name="Cullen P.A."/>
            <person name="Davis J."/>
            <person name="Johnson M."/>
            <person name="Kuczek E."/>
            <person name="Alt D.P."/>
            <person name="Peterson-Burch B."/>
            <person name="Coppel R.L."/>
            <person name="Rood J.I."/>
            <person name="Davies J.K."/>
            <person name="Adler B."/>
        </authorList>
    </citation>
    <scope>NUCLEOTIDE SEQUENCE [LARGE SCALE GENOMIC DNA]</scope>
    <source>
        <strain>JB197</strain>
    </source>
</reference>
<proteinExistence type="inferred from homology"/>
<gene>
    <name evidence="1" type="primary">rplR</name>
    <name type="ordered locus">LBJ_2643</name>
</gene>
<protein>
    <recommendedName>
        <fullName evidence="1">Large ribosomal subunit protein uL18</fullName>
    </recommendedName>
    <alternativeName>
        <fullName evidence="2">50S ribosomal protein L18</fullName>
    </alternativeName>
</protein>
<evidence type="ECO:0000255" key="1">
    <source>
        <dbReference type="HAMAP-Rule" id="MF_01337"/>
    </source>
</evidence>
<evidence type="ECO:0000305" key="2"/>